<feature type="chain" id="PRO_1000021175" description="4-hydroxy-3-methylbut-2-enyl diphosphate reductase">
    <location>
        <begin position="1"/>
        <end position="306"/>
    </location>
</feature>
<feature type="active site" description="Proton donor" evidence="1">
    <location>
        <position position="126"/>
    </location>
</feature>
<feature type="binding site" evidence="1">
    <location>
        <position position="12"/>
    </location>
    <ligand>
        <name>[4Fe-4S] cluster</name>
        <dbReference type="ChEBI" id="CHEBI:49883"/>
    </ligand>
</feature>
<feature type="binding site" evidence="1">
    <location>
        <position position="41"/>
    </location>
    <ligand>
        <name>(2E)-4-hydroxy-3-methylbut-2-enyl diphosphate</name>
        <dbReference type="ChEBI" id="CHEBI:128753"/>
    </ligand>
</feature>
<feature type="binding site" evidence="1">
    <location>
        <position position="41"/>
    </location>
    <ligand>
        <name>dimethylallyl diphosphate</name>
        <dbReference type="ChEBI" id="CHEBI:57623"/>
    </ligand>
</feature>
<feature type="binding site" evidence="1">
    <location>
        <position position="41"/>
    </location>
    <ligand>
        <name>isopentenyl diphosphate</name>
        <dbReference type="ChEBI" id="CHEBI:128769"/>
    </ligand>
</feature>
<feature type="binding site" evidence="1">
    <location>
        <position position="74"/>
    </location>
    <ligand>
        <name>(2E)-4-hydroxy-3-methylbut-2-enyl diphosphate</name>
        <dbReference type="ChEBI" id="CHEBI:128753"/>
    </ligand>
</feature>
<feature type="binding site" evidence="1">
    <location>
        <position position="74"/>
    </location>
    <ligand>
        <name>dimethylallyl diphosphate</name>
        <dbReference type="ChEBI" id="CHEBI:57623"/>
    </ligand>
</feature>
<feature type="binding site" evidence="1">
    <location>
        <position position="74"/>
    </location>
    <ligand>
        <name>isopentenyl diphosphate</name>
        <dbReference type="ChEBI" id="CHEBI:128769"/>
    </ligand>
</feature>
<feature type="binding site" evidence="1">
    <location>
        <position position="96"/>
    </location>
    <ligand>
        <name>[4Fe-4S] cluster</name>
        <dbReference type="ChEBI" id="CHEBI:49883"/>
    </ligand>
</feature>
<feature type="binding site" evidence="1">
    <location>
        <position position="124"/>
    </location>
    <ligand>
        <name>(2E)-4-hydroxy-3-methylbut-2-enyl diphosphate</name>
        <dbReference type="ChEBI" id="CHEBI:128753"/>
    </ligand>
</feature>
<feature type="binding site" evidence="1">
    <location>
        <position position="124"/>
    </location>
    <ligand>
        <name>dimethylallyl diphosphate</name>
        <dbReference type="ChEBI" id="CHEBI:57623"/>
    </ligand>
</feature>
<feature type="binding site" evidence="1">
    <location>
        <position position="124"/>
    </location>
    <ligand>
        <name>isopentenyl diphosphate</name>
        <dbReference type="ChEBI" id="CHEBI:128769"/>
    </ligand>
</feature>
<feature type="binding site" evidence="1">
    <location>
        <position position="164"/>
    </location>
    <ligand>
        <name>(2E)-4-hydroxy-3-methylbut-2-enyl diphosphate</name>
        <dbReference type="ChEBI" id="CHEBI:128753"/>
    </ligand>
</feature>
<feature type="binding site" evidence="1">
    <location>
        <position position="194"/>
    </location>
    <ligand>
        <name>[4Fe-4S] cluster</name>
        <dbReference type="ChEBI" id="CHEBI:49883"/>
    </ligand>
</feature>
<feature type="binding site" evidence="1">
    <location>
        <position position="222"/>
    </location>
    <ligand>
        <name>(2E)-4-hydroxy-3-methylbut-2-enyl diphosphate</name>
        <dbReference type="ChEBI" id="CHEBI:128753"/>
    </ligand>
</feature>
<feature type="binding site" evidence="1">
    <location>
        <position position="222"/>
    </location>
    <ligand>
        <name>dimethylallyl diphosphate</name>
        <dbReference type="ChEBI" id="CHEBI:57623"/>
    </ligand>
</feature>
<feature type="binding site" evidence="1">
    <location>
        <position position="222"/>
    </location>
    <ligand>
        <name>isopentenyl diphosphate</name>
        <dbReference type="ChEBI" id="CHEBI:128769"/>
    </ligand>
</feature>
<feature type="binding site" evidence="1">
    <location>
        <position position="223"/>
    </location>
    <ligand>
        <name>(2E)-4-hydroxy-3-methylbut-2-enyl diphosphate</name>
        <dbReference type="ChEBI" id="CHEBI:128753"/>
    </ligand>
</feature>
<feature type="binding site" evidence="1">
    <location>
        <position position="223"/>
    </location>
    <ligand>
        <name>dimethylallyl diphosphate</name>
        <dbReference type="ChEBI" id="CHEBI:57623"/>
    </ligand>
</feature>
<feature type="binding site" evidence="1">
    <location>
        <position position="223"/>
    </location>
    <ligand>
        <name>isopentenyl diphosphate</name>
        <dbReference type="ChEBI" id="CHEBI:128769"/>
    </ligand>
</feature>
<feature type="binding site" evidence="1">
    <location>
        <position position="224"/>
    </location>
    <ligand>
        <name>(2E)-4-hydroxy-3-methylbut-2-enyl diphosphate</name>
        <dbReference type="ChEBI" id="CHEBI:128753"/>
    </ligand>
</feature>
<feature type="binding site" evidence="1">
    <location>
        <position position="224"/>
    </location>
    <ligand>
        <name>dimethylallyl diphosphate</name>
        <dbReference type="ChEBI" id="CHEBI:57623"/>
    </ligand>
</feature>
<feature type="binding site" evidence="1">
    <location>
        <position position="224"/>
    </location>
    <ligand>
        <name>isopentenyl diphosphate</name>
        <dbReference type="ChEBI" id="CHEBI:128769"/>
    </ligand>
</feature>
<feature type="binding site" evidence="1">
    <location>
        <position position="266"/>
    </location>
    <ligand>
        <name>(2E)-4-hydroxy-3-methylbut-2-enyl diphosphate</name>
        <dbReference type="ChEBI" id="CHEBI:128753"/>
    </ligand>
</feature>
<feature type="binding site" evidence="1">
    <location>
        <position position="266"/>
    </location>
    <ligand>
        <name>dimethylallyl diphosphate</name>
        <dbReference type="ChEBI" id="CHEBI:57623"/>
    </ligand>
</feature>
<feature type="binding site" evidence="1">
    <location>
        <position position="266"/>
    </location>
    <ligand>
        <name>isopentenyl diphosphate</name>
        <dbReference type="ChEBI" id="CHEBI:128769"/>
    </ligand>
</feature>
<organism>
    <name type="scientific">Ruthia magnifica subsp. Calyptogena magnifica</name>
    <dbReference type="NCBI Taxonomy" id="413404"/>
    <lineage>
        <taxon>Bacteria</taxon>
        <taxon>Pseudomonadati</taxon>
        <taxon>Pseudomonadota</taxon>
        <taxon>Gammaproteobacteria</taxon>
        <taxon>Candidatus Pseudothioglobaceae</taxon>
        <taxon>Candidatus Ruthturnera</taxon>
    </lineage>
</organism>
<comment type="function">
    <text evidence="1">Catalyzes the conversion of 1-hydroxy-2-methyl-2-(E)-butenyl 4-diphosphate (HMBPP) into a mixture of isopentenyl diphosphate (IPP) and dimethylallyl diphosphate (DMAPP). Acts in the terminal step of the DOXP/MEP pathway for isoprenoid precursor biosynthesis.</text>
</comment>
<comment type="catalytic activity">
    <reaction evidence="1">
        <text>isopentenyl diphosphate + 2 oxidized [2Fe-2S]-[ferredoxin] + H2O = (2E)-4-hydroxy-3-methylbut-2-enyl diphosphate + 2 reduced [2Fe-2S]-[ferredoxin] + 2 H(+)</text>
        <dbReference type="Rhea" id="RHEA:24488"/>
        <dbReference type="Rhea" id="RHEA-COMP:10000"/>
        <dbReference type="Rhea" id="RHEA-COMP:10001"/>
        <dbReference type="ChEBI" id="CHEBI:15377"/>
        <dbReference type="ChEBI" id="CHEBI:15378"/>
        <dbReference type="ChEBI" id="CHEBI:33737"/>
        <dbReference type="ChEBI" id="CHEBI:33738"/>
        <dbReference type="ChEBI" id="CHEBI:128753"/>
        <dbReference type="ChEBI" id="CHEBI:128769"/>
        <dbReference type="EC" id="1.17.7.4"/>
    </reaction>
</comment>
<comment type="catalytic activity">
    <reaction evidence="1">
        <text>dimethylallyl diphosphate + 2 oxidized [2Fe-2S]-[ferredoxin] + H2O = (2E)-4-hydroxy-3-methylbut-2-enyl diphosphate + 2 reduced [2Fe-2S]-[ferredoxin] + 2 H(+)</text>
        <dbReference type="Rhea" id="RHEA:24825"/>
        <dbReference type="Rhea" id="RHEA-COMP:10000"/>
        <dbReference type="Rhea" id="RHEA-COMP:10001"/>
        <dbReference type="ChEBI" id="CHEBI:15377"/>
        <dbReference type="ChEBI" id="CHEBI:15378"/>
        <dbReference type="ChEBI" id="CHEBI:33737"/>
        <dbReference type="ChEBI" id="CHEBI:33738"/>
        <dbReference type="ChEBI" id="CHEBI:57623"/>
        <dbReference type="ChEBI" id="CHEBI:128753"/>
        <dbReference type="EC" id="1.17.7.4"/>
    </reaction>
</comment>
<comment type="cofactor">
    <cofactor evidence="1">
        <name>[4Fe-4S] cluster</name>
        <dbReference type="ChEBI" id="CHEBI:49883"/>
    </cofactor>
    <text evidence="1">Binds 1 [4Fe-4S] cluster per subunit.</text>
</comment>
<comment type="pathway">
    <text evidence="1">Isoprenoid biosynthesis; dimethylallyl diphosphate biosynthesis; dimethylallyl diphosphate from (2E)-4-hydroxy-3-methylbutenyl diphosphate: step 1/1.</text>
</comment>
<comment type="pathway">
    <text evidence="1">Isoprenoid biosynthesis; isopentenyl diphosphate biosynthesis via DXP pathway; isopentenyl diphosphate from 1-deoxy-D-xylulose 5-phosphate: step 6/6.</text>
</comment>
<comment type="similarity">
    <text evidence="1">Belongs to the IspH family.</text>
</comment>
<dbReference type="EC" id="1.17.7.4" evidence="1"/>
<dbReference type="EMBL" id="CP000488">
    <property type="protein sequence ID" value="ABL02728.1"/>
    <property type="molecule type" value="Genomic_DNA"/>
</dbReference>
<dbReference type="RefSeq" id="WP_011738353.1">
    <property type="nucleotide sequence ID" value="NC_008610.1"/>
</dbReference>
<dbReference type="SMR" id="A1AXS1"/>
<dbReference type="STRING" id="413404.Rmag_1023"/>
<dbReference type="KEGG" id="rma:Rmag_1023"/>
<dbReference type="eggNOG" id="COG0761">
    <property type="taxonomic scope" value="Bacteria"/>
</dbReference>
<dbReference type="HOGENOM" id="CLU_027486_1_0_6"/>
<dbReference type="OrthoDB" id="9804068at2"/>
<dbReference type="UniPathway" id="UPA00056">
    <property type="reaction ID" value="UER00097"/>
</dbReference>
<dbReference type="UniPathway" id="UPA00059">
    <property type="reaction ID" value="UER00105"/>
</dbReference>
<dbReference type="Proteomes" id="UP000002587">
    <property type="component" value="Chromosome"/>
</dbReference>
<dbReference type="GO" id="GO:0051539">
    <property type="term" value="F:4 iron, 4 sulfur cluster binding"/>
    <property type="evidence" value="ECO:0007669"/>
    <property type="project" value="UniProtKB-UniRule"/>
</dbReference>
<dbReference type="GO" id="GO:0051745">
    <property type="term" value="F:4-hydroxy-3-methylbut-2-enyl diphosphate reductase activity"/>
    <property type="evidence" value="ECO:0007669"/>
    <property type="project" value="UniProtKB-UniRule"/>
</dbReference>
<dbReference type="GO" id="GO:0046872">
    <property type="term" value="F:metal ion binding"/>
    <property type="evidence" value="ECO:0007669"/>
    <property type="project" value="UniProtKB-KW"/>
</dbReference>
<dbReference type="GO" id="GO:0050992">
    <property type="term" value="P:dimethylallyl diphosphate biosynthetic process"/>
    <property type="evidence" value="ECO:0007669"/>
    <property type="project" value="UniProtKB-UniRule"/>
</dbReference>
<dbReference type="GO" id="GO:0019288">
    <property type="term" value="P:isopentenyl diphosphate biosynthetic process, methylerythritol 4-phosphate pathway"/>
    <property type="evidence" value="ECO:0007669"/>
    <property type="project" value="UniProtKB-UniRule"/>
</dbReference>
<dbReference type="GO" id="GO:0016114">
    <property type="term" value="P:terpenoid biosynthetic process"/>
    <property type="evidence" value="ECO:0007669"/>
    <property type="project" value="UniProtKB-UniRule"/>
</dbReference>
<dbReference type="CDD" id="cd13944">
    <property type="entry name" value="lytB_ispH"/>
    <property type="match status" value="1"/>
</dbReference>
<dbReference type="Gene3D" id="3.40.50.11270">
    <property type="match status" value="1"/>
</dbReference>
<dbReference type="Gene3D" id="3.40.1010.20">
    <property type="entry name" value="4-hydroxy-3-methylbut-2-enyl diphosphate reductase, catalytic domain"/>
    <property type="match status" value="2"/>
</dbReference>
<dbReference type="HAMAP" id="MF_00191">
    <property type="entry name" value="IspH"/>
    <property type="match status" value="1"/>
</dbReference>
<dbReference type="InterPro" id="IPR003451">
    <property type="entry name" value="LytB/IspH"/>
</dbReference>
<dbReference type="NCBIfam" id="TIGR00216">
    <property type="entry name" value="ispH_lytB"/>
    <property type="match status" value="1"/>
</dbReference>
<dbReference type="NCBIfam" id="NF002188">
    <property type="entry name" value="PRK01045.1-2"/>
    <property type="match status" value="1"/>
</dbReference>
<dbReference type="NCBIfam" id="NF002190">
    <property type="entry name" value="PRK01045.1-4"/>
    <property type="match status" value="1"/>
</dbReference>
<dbReference type="PANTHER" id="PTHR30426">
    <property type="entry name" value="4-HYDROXY-3-METHYLBUT-2-ENYL DIPHOSPHATE REDUCTASE"/>
    <property type="match status" value="1"/>
</dbReference>
<dbReference type="PANTHER" id="PTHR30426:SF0">
    <property type="entry name" value="4-HYDROXY-3-METHYLBUT-2-ENYL DIPHOSPHATE REDUCTASE"/>
    <property type="match status" value="1"/>
</dbReference>
<dbReference type="Pfam" id="PF02401">
    <property type="entry name" value="LYTB"/>
    <property type="match status" value="1"/>
</dbReference>
<protein>
    <recommendedName>
        <fullName evidence="1">4-hydroxy-3-methylbut-2-enyl diphosphate reductase</fullName>
        <shortName evidence="1">HMBPP reductase</shortName>
        <ecNumber evidence="1">1.17.7.4</ecNumber>
    </recommendedName>
</protein>
<sequence length="306" mass="33898">MKVLLANPRGFCAGVDRAIEIVERALKLHGAPVYVRHEVVHNKFVVDGLKAKGAIFVEDIADVPNEQVVIFSAHGVSMAVRKQTQDIDATIYDATCPLVTKVHKEVIRKQKQQHQVILIGHKGHPEVEGTLGQSNEELQLVETIEDVGRLNLSKNTPISYTTQTTLSIDDTKHIVDYLKSKFPTIDAPKKDNICYATQNRQDGVKILMQSSDILLVLGSSNSSNSNRLREIAEKMDIPAYLINDADEIDELWLKDVNTIGVTAGASAPEVLVQEVIHYLCDKGVTKVIEVNGAKENIHFPVPKELR</sequence>
<keyword id="KW-0004">4Fe-4S</keyword>
<keyword id="KW-0408">Iron</keyword>
<keyword id="KW-0411">Iron-sulfur</keyword>
<keyword id="KW-0414">Isoprene biosynthesis</keyword>
<keyword id="KW-0479">Metal-binding</keyword>
<keyword id="KW-0560">Oxidoreductase</keyword>
<accession>A1AXS1</accession>
<proteinExistence type="inferred from homology"/>
<reference key="1">
    <citation type="journal article" date="2007" name="Science">
        <title>The Calyptogena magnifica chemoautotrophic symbiont genome.</title>
        <authorList>
            <person name="Newton I.L.G."/>
            <person name="Woyke T."/>
            <person name="Auchtung T.A."/>
            <person name="Dilly G.F."/>
            <person name="Dutton R.J."/>
            <person name="Fisher M.C."/>
            <person name="Fontanez K.M."/>
            <person name="Lau E."/>
            <person name="Stewart F.J."/>
            <person name="Richardson P.M."/>
            <person name="Barry K.W."/>
            <person name="Saunders E."/>
            <person name="Detter J.C."/>
            <person name="Wu D."/>
            <person name="Eisen J.A."/>
            <person name="Cavanaugh C.M."/>
        </authorList>
    </citation>
    <scope>NUCLEOTIDE SEQUENCE [LARGE SCALE GENOMIC DNA]</scope>
</reference>
<gene>
    <name evidence="1" type="primary">ispH</name>
    <name type="ordered locus">Rmag_1023</name>
</gene>
<name>ISPH_RUTMC</name>
<evidence type="ECO:0000255" key="1">
    <source>
        <dbReference type="HAMAP-Rule" id="MF_00191"/>
    </source>
</evidence>